<protein>
    <recommendedName>
        <fullName evidence="1">Nucleotide-binding protein Dtur_1129</fullName>
    </recommendedName>
</protein>
<evidence type="ECO:0000255" key="1">
    <source>
        <dbReference type="HAMAP-Rule" id="MF_00636"/>
    </source>
</evidence>
<feature type="chain" id="PRO_0000383242" description="Nucleotide-binding protein Dtur_1129">
    <location>
        <begin position="1"/>
        <end position="294"/>
    </location>
</feature>
<feature type="binding site" evidence="1">
    <location>
        <begin position="10"/>
        <end position="17"/>
    </location>
    <ligand>
        <name>ATP</name>
        <dbReference type="ChEBI" id="CHEBI:30616"/>
    </ligand>
</feature>
<feature type="binding site" evidence="1">
    <location>
        <begin position="61"/>
        <end position="64"/>
    </location>
    <ligand>
        <name>GTP</name>
        <dbReference type="ChEBI" id="CHEBI:37565"/>
    </ligand>
</feature>
<sequence length="294" mass="33661">MDFQVFIITGLSGAGKSQSLRILEDLGFFCVDNIPPKLVPTLIDLCLATNGKISGLAVVIDIRTENFLESFKEMVEIIKSRNIPYKILFLEAKDEVIVKRYNETRRIHPLLKEGGTILESIRLEKEKLWEIRNLATDIVNTSDFSIKELKEVILKIVTSLNTTVKPNFLITITSFGFKYGVPIDAHLVFDVRFLPNPFYDPKLRPFSGKSEEVRGFVLSKKEARDFIEHIKKLLDFLIPLYEEEGRTVLNIAIGCTGGRHRAVVIADEIFFYLAPKYNTHLLHRDIEKDVHILK</sequence>
<name>Y1129_DICTD</name>
<accession>B8E2D1</accession>
<keyword id="KW-0067">ATP-binding</keyword>
<keyword id="KW-0342">GTP-binding</keyword>
<keyword id="KW-0547">Nucleotide-binding</keyword>
<keyword id="KW-1185">Reference proteome</keyword>
<gene>
    <name type="ordered locus">Dtur_1129</name>
</gene>
<proteinExistence type="inferred from homology"/>
<organism>
    <name type="scientific">Dictyoglomus turgidum (strain DSM 6724 / Z-1310)</name>
    <dbReference type="NCBI Taxonomy" id="515635"/>
    <lineage>
        <taxon>Bacteria</taxon>
        <taxon>Pseudomonadati</taxon>
        <taxon>Dictyoglomota</taxon>
        <taxon>Dictyoglomia</taxon>
        <taxon>Dictyoglomales</taxon>
        <taxon>Dictyoglomaceae</taxon>
        <taxon>Dictyoglomus</taxon>
    </lineage>
</organism>
<comment type="function">
    <text evidence="1">Displays ATPase and GTPase activities.</text>
</comment>
<comment type="similarity">
    <text evidence="1">Belongs to the RapZ-like family.</text>
</comment>
<reference key="1">
    <citation type="journal article" date="2016" name="Front. Microbiol.">
        <title>The complete genome sequence of hyperthermophile Dictyoglomus turgidum DSM 6724 reveals a specialized carbohydrate fermentor.</title>
        <authorList>
            <person name="Brumm P.J."/>
            <person name="Gowda K."/>
            <person name="Robb F.T."/>
            <person name="Mead D.A."/>
        </authorList>
    </citation>
    <scope>NUCLEOTIDE SEQUENCE [LARGE SCALE GENOMIC DNA]</scope>
    <source>
        <strain>DSM 6724 / Z-1310</strain>
    </source>
</reference>
<dbReference type="EMBL" id="CP001251">
    <property type="protein sequence ID" value="ACK42408.1"/>
    <property type="molecule type" value="Genomic_DNA"/>
</dbReference>
<dbReference type="RefSeq" id="YP_002353022.1">
    <property type="nucleotide sequence ID" value="NC_011661.1"/>
</dbReference>
<dbReference type="SMR" id="B8E2D1"/>
<dbReference type="FunCoup" id="B8E2D1">
    <property type="interactions" value="142"/>
</dbReference>
<dbReference type="STRING" id="515635.Dtur_1129"/>
<dbReference type="EnsemblBacteria" id="ACK42408">
    <property type="protein sequence ID" value="ACK42408"/>
    <property type="gene ID" value="Dtur_1129"/>
</dbReference>
<dbReference type="KEGG" id="dtu:Dtur_1129"/>
<dbReference type="PATRIC" id="fig|515635.4.peg.1166"/>
<dbReference type="eggNOG" id="COG1660">
    <property type="taxonomic scope" value="Bacteria"/>
</dbReference>
<dbReference type="HOGENOM" id="CLU_059558_0_0_0"/>
<dbReference type="InParanoid" id="B8E2D1"/>
<dbReference type="OrthoDB" id="9784461at2"/>
<dbReference type="Proteomes" id="UP000007719">
    <property type="component" value="Chromosome"/>
</dbReference>
<dbReference type="GO" id="GO:0005524">
    <property type="term" value="F:ATP binding"/>
    <property type="evidence" value="ECO:0007669"/>
    <property type="project" value="UniProtKB-UniRule"/>
</dbReference>
<dbReference type="GO" id="GO:0005525">
    <property type="term" value="F:GTP binding"/>
    <property type="evidence" value="ECO:0007669"/>
    <property type="project" value="UniProtKB-UniRule"/>
</dbReference>
<dbReference type="GO" id="GO:0060090">
    <property type="term" value="F:molecular adaptor activity"/>
    <property type="evidence" value="ECO:0000318"/>
    <property type="project" value="GO_Central"/>
</dbReference>
<dbReference type="Gene3D" id="3.40.50.300">
    <property type="entry name" value="P-loop containing nucleotide triphosphate hydrolases"/>
    <property type="match status" value="1"/>
</dbReference>
<dbReference type="HAMAP" id="MF_00636">
    <property type="entry name" value="RapZ_like"/>
    <property type="match status" value="1"/>
</dbReference>
<dbReference type="InterPro" id="IPR027417">
    <property type="entry name" value="P-loop_NTPase"/>
</dbReference>
<dbReference type="InterPro" id="IPR005337">
    <property type="entry name" value="RapZ-like"/>
</dbReference>
<dbReference type="InterPro" id="IPR053930">
    <property type="entry name" value="RapZ-like_N"/>
</dbReference>
<dbReference type="InterPro" id="IPR053931">
    <property type="entry name" value="RapZ_C"/>
</dbReference>
<dbReference type="NCBIfam" id="NF003828">
    <property type="entry name" value="PRK05416.1"/>
    <property type="match status" value="1"/>
</dbReference>
<dbReference type="PANTHER" id="PTHR30448">
    <property type="entry name" value="RNASE ADAPTER PROTEIN RAPZ"/>
    <property type="match status" value="1"/>
</dbReference>
<dbReference type="PANTHER" id="PTHR30448:SF0">
    <property type="entry name" value="RNASE ADAPTER PROTEIN RAPZ"/>
    <property type="match status" value="1"/>
</dbReference>
<dbReference type="Pfam" id="PF22740">
    <property type="entry name" value="PapZ_C"/>
    <property type="match status" value="1"/>
</dbReference>
<dbReference type="Pfam" id="PF03668">
    <property type="entry name" value="RapZ-like_N"/>
    <property type="match status" value="1"/>
</dbReference>
<dbReference type="PIRSF" id="PIRSF005052">
    <property type="entry name" value="P-loopkin"/>
    <property type="match status" value="1"/>
</dbReference>
<dbReference type="SUPFAM" id="SSF52540">
    <property type="entry name" value="P-loop containing nucleoside triphosphate hydrolases"/>
    <property type="match status" value="1"/>
</dbReference>